<name>IF2_HYPNA</name>
<feature type="chain" id="PRO_0000335479" description="Translation initiation factor IF-2">
    <location>
        <begin position="1"/>
        <end position="853"/>
    </location>
</feature>
<feature type="domain" description="tr-type G">
    <location>
        <begin position="347"/>
        <end position="515"/>
    </location>
</feature>
<feature type="region of interest" description="Disordered" evidence="3">
    <location>
        <begin position="1"/>
        <end position="68"/>
    </location>
</feature>
<feature type="region of interest" description="Disordered" evidence="3">
    <location>
        <begin position="94"/>
        <end position="265"/>
    </location>
</feature>
<feature type="region of interest" description="G1" evidence="1">
    <location>
        <begin position="356"/>
        <end position="363"/>
    </location>
</feature>
<feature type="region of interest" description="G2" evidence="1">
    <location>
        <begin position="381"/>
        <end position="385"/>
    </location>
</feature>
<feature type="region of interest" description="G3" evidence="1">
    <location>
        <begin position="403"/>
        <end position="406"/>
    </location>
</feature>
<feature type="region of interest" description="G4" evidence="1">
    <location>
        <begin position="457"/>
        <end position="460"/>
    </location>
</feature>
<feature type="region of interest" description="G5" evidence="1">
    <location>
        <begin position="493"/>
        <end position="495"/>
    </location>
</feature>
<feature type="compositionally biased region" description="Polar residues" evidence="3">
    <location>
        <begin position="20"/>
        <end position="32"/>
    </location>
</feature>
<feature type="compositionally biased region" description="Basic and acidic residues" evidence="3">
    <location>
        <begin position="94"/>
        <end position="161"/>
    </location>
</feature>
<feature type="compositionally biased region" description="Low complexity" evidence="3">
    <location>
        <begin position="163"/>
        <end position="176"/>
    </location>
</feature>
<feature type="compositionally biased region" description="Basic and acidic residues" evidence="3">
    <location>
        <begin position="196"/>
        <end position="219"/>
    </location>
</feature>
<feature type="compositionally biased region" description="Basic and acidic residues" evidence="3">
    <location>
        <begin position="245"/>
        <end position="265"/>
    </location>
</feature>
<feature type="binding site" evidence="2">
    <location>
        <begin position="356"/>
        <end position="363"/>
    </location>
    <ligand>
        <name>GTP</name>
        <dbReference type="ChEBI" id="CHEBI:37565"/>
    </ligand>
</feature>
<feature type="binding site" evidence="2">
    <location>
        <begin position="403"/>
        <end position="407"/>
    </location>
    <ligand>
        <name>GTP</name>
        <dbReference type="ChEBI" id="CHEBI:37565"/>
    </ligand>
</feature>
<feature type="binding site" evidence="2">
    <location>
        <begin position="457"/>
        <end position="460"/>
    </location>
    <ligand>
        <name>GTP</name>
        <dbReference type="ChEBI" id="CHEBI:37565"/>
    </ligand>
</feature>
<evidence type="ECO:0000250" key="1"/>
<evidence type="ECO:0000255" key="2">
    <source>
        <dbReference type="HAMAP-Rule" id="MF_00100"/>
    </source>
</evidence>
<evidence type="ECO:0000256" key="3">
    <source>
        <dbReference type="SAM" id="MobiDB-lite"/>
    </source>
</evidence>
<comment type="function">
    <text evidence="2">One of the essential components for the initiation of protein synthesis. Protects formylmethionyl-tRNA from spontaneous hydrolysis and promotes its binding to the 30S ribosomal subunits. Also involved in the hydrolysis of GTP during the formation of the 70S ribosomal complex.</text>
</comment>
<comment type="subcellular location">
    <subcellularLocation>
        <location evidence="2">Cytoplasm</location>
    </subcellularLocation>
</comment>
<comment type="similarity">
    <text evidence="2">Belongs to the TRAFAC class translation factor GTPase superfamily. Classic translation factor GTPase family. IF-2 subfamily.</text>
</comment>
<accession>Q0C5Z5</accession>
<sequence>MSDTNDQGNSGGRKPLTVVRKTSGTVKQSFSHGRSKQVVVETKKRRPVSSGGGQGGDSGPSTPSASDGMEAKLVALAAKLGITVAELKARQKVLEQRKAEEASRAKDTEAERAAQDRLRTEQERKQQEAREREEAELRRRAEEEAAKLADVASREAVERPSKAPRAAPAAQTPPAADGEADAGRSKRSSGGGASKPARDDRADRAREVATKPSRGDAERRRGKLTIASALGDDADRQRSLASVRRARERERERRVGGGDSNDKTSIEVTLPETITLQDLAQRMNERVADVVKFMFKQGEMLRGNDIVDADMAELIAGEFGHTVRRVSEADVEIGLEGTDDRDEDLQPRAPIVTIMGHVDHGKTSLLDALRKTDVAGGEAGGITQHIGAYQVQLKSGERITFLDTPGHAAFTAMRARGANATDIAILVVAADDSVKPQTIESISHAKAAGVPIVVAITKSDLHDANPEKVLTDLLQYDIQVEAMGGVTQAVKVSAKTGAGLDELTDAISIQAEILELKANPNRQADGVVIESKLDKGRGPVATVLVKRGTLKRGDIVVAGANWGKVRALVDERGQQLADAGPSLPVEVLGLDGAPDPGDAIVVVDSEARAREITEYRIRTKRQVAGNASVAARASLDQLMNRLKDGAIVTSELPIVLKGDVQGSVEAITMSLDKISTEEVRAKVIHGAVGGISESDVLLARSSNAPIFAFNVRANKQARDLAEREGVEIRYYSIIYDLLDDVKATLSGMLAPEKRETFLGYADILEVFNITKVGKVAGCRISEGKVMRGCGVRLLRDNVVIHEGKLKTLKRFKDEVSEVNAGMECGMAFERYDDIRVGDKIECFQVEEIARTLA</sequence>
<reference key="1">
    <citation type="journal article" date="2006" name="J. Bacteriol.">
        <title>Comparative genomic evidence for a close relationship between the dimorphic prosthecate bacteria Hyphomonas neptunium and Caulobacter crescentus.</title>
        <authorList>
            <person name="Badger J.H."/>
            <person name="Hoover T.R."/>
            <person name="Brun Y.V."/>
            <person name="Weiner R.M."/>
            <person name="Laub M.T."/>
            <person name="Alexandre G."/>
            <person name="Mrazek J."/>
            <person name="Ren Q."/>
            <person name="Paulsen I.T."/>
            <person name="Nelson K.E."/>
            <person name="Khouri H.M."/>
            <person name="Radune D."/>
            <person name="Sosa J."/>
            <person name="Dodson R.J."/>
            <person name="Sullivan S.A."/>
            <person name="Rosovitz M.J."/>
            <person name="Madupu R."/>
            <person name="Brinkac L.M."/>
            <person name="Durkin A.S."/>
            <person name="Daugherty S.C."/>
            <person name="Kothari S.P."/>
            <person name="Giglio M.G."/>
            <person name="Zhou L."/>
            <person name="Haft D.H."/>
            <person name="Selengut J.D."/>
            <person name="Davidsen T.M."/>
            <person name="Yang Q."/>
            <person name="Zafar N."/>
            <person name="Ward N.L."/>
        </authorList>
    </citation>
    <scope>NUCLEOTIDE SEQUENCE [LARGE SCALE GENOMIC DNA]</scope>
    <source>
        <strain>ATCC 15444</strain>
    </source>
</reference>
<gene>
    <name evidence="2" type="primary">infB</name>
    <name type="ordered locus">HNE_0114</name>
</gene>
<organism>
    <name type="scientific">Hyphomonas neptunium (strain ATCC 15444)</name>
    <dbReference type="NCBI Taxonomy" id="228405"/>
    <lineage>
        <taxon>Bacteria</taxon>
        <taxon>Pseudomonadati</taxon>
        <taxon>Pseudomonadota</taxon>
        <taxon>Alphaproteobacteria</taxon>
        <taxon>Hyphomonadales</taxon>
        <taxon>Hyphomonadaceae</taxon>
        <taxon>Hyphomonas</taxon>
    </lineage>
</organism>
<protein>
    <recommendedName>
        <fullName evidence="2">Translation initiation factor IF-2</fullName>
    </recommendedName>
</protein>
<keyword id="KW-0963">Cytoplasm</keyword>
<keyword id="KW-0342">GTP-binding</keyword>
<keyword id="KW-0396">Initiation factor</keyword>
<keyword id="KW-0547">Nucleotide-binding</keyword>
<keyword id="KW-0648">Protein biosynthesis</keyword>
<keyword id="KW-1185">Reference proteome</keyword>
<dbReference type="EMBL" id="CP000158">
    <property type="protein sequence ID" value="ABI75987.1"/>
    <property type="molecule type" value="Genomic_DNA"/>
</dbReference>
<dbReference type="RefSeq" id="WP_011645148.1">
    <property type="nucleotide sequence ID" value="NC_008358.1"/>
</dbReference>
<dbReference type="SMR" id="Q0C5Z5"/>
<dbReference type="STRING" id="228405.HNE_0114"/>
<dbReference type="KEGG" id="hne:HNE_0114"/>
<dbReference type="eggNOG" id="COG0532">
    <property type="taxonomic scope" value="Bacteria"/>
</dbReference>
<dbReference type="HOGENOM" id="CLU_006301_10_1_5"/>
<dbReference type="Proteomes" id="UP000001959">
    <property type="component" value="Chromosome"/>
</dbReference>
<dbReference type="GO" id="GO:0005829">
    <property type="term" value="C:cytosol"/>
    <property type="evidence" value="ECO:0007669"/>
    <property type="project" value="TreeGrafter"/>
</dbReference>
<dbReference type="GO" id="GO:0005525">
    <property type="term" value="F:GTP binding"/>
    <property type="evidence" value="ECO:0007669"/>
    <property type="project" value="UniProtKB-KW"/>
</dbReference>
<dbReference type="GO" id="GO:0003924">
    <property type="term" value="F:GTPase activity"/>
    <property type="evidence" value="ECO:0007669"/>
    <property type="project" value="UniProtKB-UniRule"/>
</dbReference>
<dbReference type="GO" id="GO:0003743">
    <property type="term" value="F:translation initiation factor activity"/>
    <property type="evidence" value="ECO:0007669"/>
    <property type="project" value="UniProtKB-UniRule"/>
</dbReference>
<dbReference type="CDD" id="cd01887">
    <property type="entry name" value="IF2_eIF5B"/>
    <property type="match status" value="1"/>
</dbReference>
<dbReference type="CDD" id="cd03702">
    <property type="entry name" value="IF2_mtIF2_II"/>
    <property type="match status" value="1"/>
</dbReference>
<dbReference type="CDD" id="cd03692">
    <property type="entry name" value="mtIF2_IVc"/>
    <property type="match status" value="1"/>
</dbReference>
<dbReference type="FunFam" id="2.40.30.10:FF:000007">
    <property type="entry name" value="Translation initiation factor IF-2"/>
    <property type="match status" value="1"/>
</dbReference>
<dbReference type="FunFam" id="2.40.30.10:FF:000008">
    <property type="entry name" value="Translation initiation factor IF-2"/>
    <property type="match status" value="1"/>
</dbReference>
<dbReference type="FunFam" id="3.40.50.10050:FF:000001">
    <property type="entry name" value="Translation initiation factor IF-2"/>
    <property type="match status" value="1"/>
</dbReference>
<dbReference type="FunFam" id="3.40.50.300:FF:000019">
    <property type="entry name" value="Translation initiation factor IF-2"/>
    <property type="match status" value="1"/>
</dbReference>
<dbReference type="Gene3D" id="3.40.50.300">
    <property type="entry name" value="P-loop containing nucleotide triphosphate hydrolases"/>
    <property type="match status" value="1"/>
</dbReference>
<dbReference type="Gene3D" id="2.40.30.10">
    <property type="entry name" value="Translation factors"/>
    <property type="match status" value="2"/>
</dbReference>
<dbReference type="Gene3D" id="3.40.50.10050">
    <property type="entry name" value="Translation initiation factor IF- 2, domain 3"/>
    <property type="match status" value="1"/>
</dbReference>
<dbReference type="HAMAP" id="MF_00100_B">
    <property type="entry name" value="IF_2_B"/>
    <property type="match status" value="1"/>
</dbReference>
<dbReference type="InterPro" id="IPR053905">
    <property type="entry name" value="EF-G-like_DII"/>
</dbReference>
<dbReference type="InterPro" id="IPR013575">
    <property type="entry name" value="IF2_assoc_dom_bac"/>
</dbReference>
<dbReference type="InterPro" id="IPR044145">
    <property type="entry name" value="IF2_II"/>
</dbReference>
<dbReference type="InterPro" id="IPR006847">
    <property type="entry name" value="IF2_N"/>
</dbReference>
<dbReference type="InterPro" id="IPR027417">
    <property type="entry name" value="P-loop_NTPase"/>
</dbReference>
<dbReference type="InterPro" id="IPR005225">
    <property type="entry name" value="Small_GTP-bd"/>
</dbReference>
<dbReference type="InterPro" id="IPR000795">
    <property type="entry name" value="T_Tr_GTP-bd_dom"/>
</dbReference>
<dbReference type="InterPro" id="IPR000178">
    <property type="entry name" value="TF_IF2_bacterial-like"/>
</dbReference>
<dbReference type="InterPro" id="IPR015760">
    <property type="entry name" value="TIF_IF2"/>
</dbReference>
<dbReference type="InterPro" id="IPR023115">
    <property type="entry name" value="TIF_IF2_dom3"/>
</dbReference>
<dbReference type="InterPro" id="IPR036925">
    <property type="entry name" value="TIF_IF2_dom3_sf"/>
</dbReference>
<dbReference type="InterPro" id="IPR009000">
    <property type="entry name" value="Transl_B-barrel_sf"/>
</dbReference>
<dbReference type="NCBIfam" id="TIGR00487">
    <property type="entry name" value="IF-2"/>
    <property type="match status" value="1"/>
</dbReference>
<dbReference type="NCBIfam" id="TIGR00231">
    <property type="entry name" value="small_GTP"/>
    <property type="match status" value="1"/>
</dbReference>
<dbReference type="PANTHER" id="PTHR43381:SF5">
    <property type="entry name" value="TR-TYPE G DOMAIN-CONTAINING PROTEIN"/>
    <property type="match status" value="1"/>
</dbReference>
<dbReference type="PANTHER" id="PTHR43381">
    <property type="entry name" value="TRANSLATION INITIATION FACTOR IF-2-RELATED"/>
    <property type="match status" value="1"/>
</dbReference>
<dbReference type="Pfam" id="PF22042">
    <property type="entry name" value="EF-G_D2"/>
    <property type="match status" value="1"/>
</dbReference>
<dbReference type="Pfam" id="PF00009">
    <property type="entry name" value="GTP_EFTU"/>
    <property type="match status" value="1"/>
</dbReference>
<dbReference type="Pfam" id="PF11987">
    <property type="entry name" value="IF-2"/>
    <property type="match status" value="1"/>
</dbReference>
<dbReference type="Pfam" id="PF08364">
    <property type="entry name" value="IF2_assoc"/>
    <property type="match status" value="1"/>
</dbReference>
<dbReference type="Pfam" id="PF04760">
    <property type="entry name" value="IF2_N"/>
    <property type="match status" value="1"/>
</dbReference>
<dbReference type="SUPFAM" id="SSF52156">
    <property type="entry name" value="Initiation factor IF2/eIF5b, domain 3"/>
    <property type="match status" value="1"/>
</dbReference>
<dbReference type="SUPFAM" id="SSF52540">
    <property type="entry name" value="P-loop containing nucleoside triphosphate hydrolases"/>
    <property type="match status" value="1"/>
</dbReference>
<dbReference type="SUPFAM" id="SSF50447">
    <property type="entry name" value="Translation proteins"/>
    <property type="match status" value="2"/>
</dbReference>
<dbReference type="PROSITE" id="PS51722">
    <property type="entry name" value="G_TR_2"/>
    <property type="match status" value="1"/>
</dbReference>
<dbReference type="PROSITE" id="PS01176">
    <property type="entry name" value="IF2"/>
    <property type="match status" value="1"/>
</dbReference>
<proteinExistence type="inferred from homology"/>